<evidence type="ECO:0000255" key="1">
    <source>
        <dbReference type="PROSITE-ProRule" id="PRU00159"/>
    </source>
</evidence>
<evidence type="ECO:0000255" key="2">
    <source>
        <dbReference type="PROSITE-ProRule" id="PRU00191"/>
    </source>
</evidence>
<evidence type="ECO:0000255" key="3">
    <source>
        <dbReference type="PROSITE-ProRule" id="PRU00192"/>
    </source>
</evidence>
<evidence type="ECO:0000255" key="4">
    <source>
        <dbReference type="PROSITE-ProRule" id="PRU10028"/>
    </source>
</evidence>
<evidence type="ECO:0000256" key="5">
    <source>
        <dbReference type="SAM" id="MobiDB-lite"/>
    </source>
</evidence>
<evidence type="ECO:0000305" key="6"/>
<feature type="chain" id="PRO_0000088138" description="Tyrosine-protein kinase SPK-1">
    <location>
        <begin position="1"/>
        <end position="497"/>
    </location>
</feature>
<feature type="domain" description="SH3" evidence="3">
    <location>
        <begin position="33"/>
        <end position="94"/>
    </location>
</feature>
<feature type="domain" description="SH2" evidence="2">
    <location>
        <begin position="100"/>
        <end position="200"/>
    </location>
</feature>
<feature type="domain" description="Protein kinase" evidence="1">
    <location>
        <begin position="220"/>
        <end position="482"/>
    </location>
</feature>
<feature type="region of interest" description="Disordered" evidence="5">
    <location>
        <begin position="1"/>
        <end position="25"/>
    </location>
</feature>
<feature type="active site" description="Proton acceptor" evidence="1 4">
    <location>
        <position position="342"/>
    </location>
</feature>
<feature type="binding site" evidence="1">
    <location>
        <begin position="226"/>
        <end position="234"/>
    </location>
    <ligand>
        <name>ATP</name>
        <dbReference type="ChEBI" id="CHEBI:30616"/>
    </ligand>
</feature>
<feature type="binding site" evidence="1">
    <location>
        <position position="248"/>
    </location>
    <ligand>
        <name>ATP</name>
        <dbReference type="ChEBI" id="CHEBI:30616"/>
    </ligand>
</feature>
<feature type="sequence variant">
    <original>D</original>
    <variation>A</variation>
    <location>
        <position position="212"/>
    </location>
</feature>
<feature type="sequence variant">
    <original>H</original>
    <variation>D</variation>
    <location>
        <position position="235"/>
    </location>
</feature>
<protein>
    <recommendedName>
        <fullName>Tyrosine-protein kinase SPK-1</fullName>
        <ecNumber>2.7.10.2</ecNumber>
    </recommendedName>
</protein>
<keyword id="KW-0067">ATP-binding</keyword>
<keyword id="KW-0418">Kinase</keyword>
<keyword id="KW-0547">Nucleotide-binding</keyword>
<keyword id="KW-0597">Phosphoprotein</keyword>
<keyword id="KW-0727">SH2 domain</keyword>
<keyword id="KW-0728">SH3 domain</keyword>
<keyword id="KW-0808">Transferase</keyword>
<keyword id="KW-0829">Tyrosine-protein kinase</keyword>
<dbReference type="EC" id="2.7.10.2"/>
<dbReference type="EMBL" id="X75310">
    <property type="protein sequence ID" value="CAA53058.1"/>
    <property type="molecule type" value="mRNA"/>
</dbReference>
<dbReference type="PIR" id="S43532">
    <property type="entry name" value="S43532"/>
</dbReference>
<dbReference type="SMR" id="P42687"/>
<dbReference type="BRENDA" id="2.7.10.2">
    <property type="organism ID" value="2016"/>
</dbReference>
<dbReference type="GO" id="GO:0005524">
    <property type="term" value="F:ATP binding"/>
    <property type="evidence" value="ECO:0007669"/>
    <property type="project" value="UniProtKB-KW"/>
</dbReference>
<dbReference type="GO" id="GO:0004715">
    <property type="term" value="F:non-membrane spanning protein tyrosine kinase activity"/>
    <property type="evidence" value="ECO:0007669"/>
    <property type="project" value="UniProtKB-EC"/>
</dbReference>
<dbReference type="CDD" id="cd00192">
    <property type="entry name" value="PTKc"/>
    <property type="match status" value="1"/>
</dbReference>
<dbReference type="CDD" id="cd00174">
    <property type="entry name" value="SH3"/>
    <property type="match status" value="1"/>
</dbReference>
<dbReference type="FunFam" id="1.10.510.10:FF:000554">
    <property type="entry name" value="Predicted protein"/>
    <property type="match status" value="1"/>
</dbReference>
<dbReference type="Gene3D" id="3.30.505.10">
    <property type="entry name" value="SH2 domain"/>
    <property type="match status" value="1"/>
</dbReference>
<dbReference type="Gene3D" id="2.30.30.40">
    <property type="entry name" value="SH3 Domains"/>
    <property type="match status" value="1"/>
</dbReference>
<dbReference type="Gene3D" id="1.10.510.10">
    <property type="entry name" value="Transferase(Phosphotransferase) domain 1"/>
    <property type="match status" value="1"/>
</dbReference>
<dbReference type="InterPro" id="IPR011009">
    <property type="entry name" value="Kinase-like_dom_sf"/>
</dbReference>
<dbReference type="InterPro" id="IPR050198">
    <property type="entry name" value="Non-receptor_tyrosine_kinases"/>
</dbReference>
<dbReference type="InterPro" id="IPR000719">
    <property type="entry name" value="Prot_kinase_dom"/>
</dbReference>
<dbReference type="InterPro" id="IPR017441">
    <property type="entry name" value="Protein_kinase_ATP_BS"/>
</dbReference>
<dbReference type="InterPro" id="IPR001245">
    <property type="entry name" value="Ser-Thr/Tyr_kinase_cat_dom"/>
</dbReference>
<dbReference type="InterPro" id="IPR000980">
    <property type="entry name" value="SH2"/>
</dbReference>
<dbReference type="InterPro" id="IPR036860">
    <property type="entry name" value="SH2_dom_sf"/>
</dbReference>
<dbReference type="InterPro" id="IPR036028">
    <property type="entry name" value="SH3-like_dom_sf"/>
</dbReference>
<dbReference type="InterPro" id="IPR001452">
    <property type="entry name" value="SH3_domain"/>
</dbReference>
<dbReference type="InterPro" id="IPR008266">
    <property type="entry name" value="Tyr_kinase_AS"/>
</dbReference>
<dbReference type="InterPro" id="IPR020635">
    <property type="entry name" value="Tyr_kinase_cat_dom"/>
</dbReference>
<dbReference type="PANTHER" id="PTHR24418">
    <property type="entry name" value="TYROSINE-PROTEIN KINASE"/>
    <property type="match status" value="1"/>
</dbReference>
<dbReference type="Pfam" id="PF07714">
    <property type="entry name" value="PK_Tyr_Ser-Thr"/>
    <property type="match status" value="1"/>
</dbReference>
<dbReference type="Pfam" id="PF00017">
    <property type="entry name" value="SH2"/>
    <property type="match status" value="1"/>
</dbReference>
<dbReference type="Pfam" id="PF00018">
    <property type="entry name" value="SH3_1"/>
    <property type="match status" value="1"/>
</dbReference>
<dbReference type="PRINTS" id="PR00401">
    <property type="entry name" value="SH2DOMAIN"/>
</dbReference>
<dbReference type="PRINTS" id="PR00109">
    <property type="entry name" value="TYRKINASE"/>
</dbReference>
<dbReference type="SMART" id="SM00252">
    <property type="entry name" value="SH2"/>
    <property type="match status" value="1"/>
</dbReference>
<dbReference type="SMART" id="SM00326">
    <property type="entry name" value="SH3"/>
    <property type="match status" value="1"/>
</dbReference>
<dbReference type="SMART" id="SM00219">
    <property type="entry name" value="TyrKc"/>
    <property type="match status" value="1"/>
</dbReference>
<dbReference type="SUPFAM" id="SSF56112">
    <property type="entry name" value="Protein kinase-like (PK-like)"/>
    <property type="match status" value="1"/>
</dbReference>
<dbReference type="SUPFAM" id="SSF55550">
    <property type="entry name" value="SH2 domain"/>
    <property type="match status" value="1"/>
</dbReference>
<dbReference type="SUPFAM" id="SSF50044">
    <property type="entry name" value="SH3-domain"/>
    <property type="match status" value="1"/>
</dbReference>
<dbReference type="PROSITE" id="PS00107">
    <property type="entry name" value="PROTEIN_KINASE_ATP"/>
    <property type="match status" value="1"/>
</dbReference>
<dbReference type="PROSITE" id="PS50011">
    <property type="entry name" value="PROTEIN_KINASE_DOM"/>
    <property type="match status" value="1"/>
</dbReference>
<dbReference type="PROSITE" id="PS00109">
    <property type="entry name" value="PROTEIN_KINASE_TYR"/>
    <property type="match status" value="1"/>
</dbReference>
<dbReference type="PROSITE" id="PS50001">
    <property type="entry name" value="SH2"/>
    <property type="match status" value="1"/>
</dbReference>
<dbReference type="PROSITE" id="PS50002">
    <property type="entry name" value="SH3"/>
    <property type="match status" value="1"/>
</dbReference>
<sequence>MGQKFSIKCKKQSKNKNTSKCQKIPKKAYEGPPGSYMVKAKYKYAASGDTDISFEEKEIMYVLEQFDEFWLKVVKQKDNKEGLVPSNYVSKQDGSPQSVEAWREIQRWEAEKSLMKIGLQKGTYIIRPSRKENSYALSVRDFDEKKKICIVKHFQIKTLQDEKGISYSVNIRNFPNILTLIQFYEKNGIGNTHIPLTDPMPDNYQPPVHFQDIEINRENIEILNEIGRGFFGSVHRAKWGRSYEVAAKMLQSSKAEREKFVLEAKIMHKLRHRKIVELLGVCTEPQDMPMLIIVEYMKNGSLKEYLKTPDGKKTNLNQMVHMMAEISEGMAYLESEKVVHRDLRADNILVANDLTRKVADFGLTELTDGSLGDQEKKTLRFPYKWTAPEAAKSKVFTSKSDVWSYGIVMFEILTWASSPYPDIPAKEVIEKVSKGYRMPNPEKFITGVCCPDEIYKIMIWCWDANPEKRPTFLVLQEKMDLLIVDTLTNNAYYSHSK</sequence>
<comment type="catalytic activity">
    <reaction evidence="4">
        <text>L-tyrosyl-[protein] + ATP = O-phospho-L-tyrosyl-[protein] + ADP + H(+)</text>
        <dbReference type="Rhea" id="RHEA:10596"/>
        <dbReference type="Rhea" id="RHEA-COMP:10136"/>
        <dbReference type="Rhea" id="RHEA-COMP:20101"/>
        <dbReference type="ChEBI" id="CHEBI:15378"/>
        <dbReference type="ChEBI" id="CHEBI:30616"/>
        <dbReference type="ChEBI" id="CHEBI:46858"/>
        <dbReference type="ChEBI" id="CHEBI:61978"/>
        <dbReference type="ChEBI" id="CHEBI:456216"/>
        <dbReference type="EC" id="2.7.10.2"/>
    </reaction>
</comment>
<comment type="similarity">
    <text evidence="1">Belongs to the protein kinase superfamily. Tyr protein kinase family.</text>
</comment>
<comment type="caution">
    <text evidence="6">It is uncertain whether Met-1 is the initiator.</text>
</comment>
<accession>P42687</accession>
<name>SPK1_GIRTI</name>
<organism>
    <name type="scientific">Girardia tigrina</name>
    <name type="common">Planarian</name>
    <name type="synonym">Dugesia tigrina</name>
    <dbReference type="NCBI Taxonomy" id="6162"/>
    <lineage>
        <taxon>Eukaryota</taxon>
        <taxon>Metazoa</taxon>
        <taxon>Spiralia</taxon>
        <taxon>Lophotrochozoa</taxon>
        <taxon>Platyhelminthes</taxon>
        <taxon>Rhabditophora</taxon>
        <taxon>Seriata</taxon>
        <taxon>Tricladida</taxon>
        <taxon>Continenticola</taxon>
        <taxon>Geoplanoidea</taxon>
        <taxon>Dugesiidae</taxon>
        <taxon>Girardia</taxon>
    </lineage>
</organism>
<proteinExistence type="evidence at transcript level"/>
<reference key="1">
    <citation type="journal article" date="1994" name="Oncogene">
        <title>Structure and expression of Spk-1, an src-related gene product found in the planarian Dugesia (G) tigrina.</title>
        <authorList>
            <person name="Burgaya F."/>
            <person name="Garcia-Fernandez J."/>
            <person name="Riutort M."/>
            <person name="Baguna J."/>
            <person name="Salo E."/>
        </authorList>
    </citation>
    <scope>NUCLEOTIDE SEQUENCE [MRNA]</scope>
</reference>